<comment type="function">
    <text evidence="1">Fluoride-specific ion channel. Important for reducing fluoride concentration in the cell, thus reducing its toxicity.</text>
</comment>
<comment type="catalytic activity">
    <reaction evidence="1">
        <text>fluoride(in) = fluoride(out)</text>
        <dbReference type="Rhea" id="RHEA:76159"/>
        <dbReference type="ChEBI" id="CHEBI:17051"/>
    </reaction>
    <physiologicalReaction direction="left-to-right" evidence="1">
        <dbReference type="Rhea" id="RHEA:76160"/>
    </physiologicalReaction>
</comment>
<comment type="activity regulation">
    <text evidence="1">Na(+) is not transported, but it plays an essential structural role and its presence is essential for fluoride channel function.</text>
</comment>
<comment type="subcellular location">
    <subcellularLocation>
        <location evidence="1">Cell inner membrane</location>
        <topology evidence="1">Multi-pass membrane protein</topology>
    </subcellularLocation>
</comment>
<comment type="similarity">
    <text evidence="1">Belongs to the fluoride channel Fluc/FEX (TC 1.A.43) family.</text>
</comment>
<evidence type="ECO:0000255" key="1">
    <source>
        <dbReference type="HAMAP-Rule" id="MF_00454"/>
    </source>
</evidence>
<accession>B0TUP5</accession>
<reference key="1">
    <citation type="submission" date="2008-01" db="EMBL/GenBank/DDBJ databases">
        <title>Complete sequence of Shewanella halifaxensis HAW-EB4.</title>
        <authorList>
            <consortium name="US DOE Joint Genome Institute"/>
            <person name="Copeland A."/>
            <person name="Lucas S."/>
            <person name="Lapidus A."/>
            <person name="Glavina del Rio T."/>
            <person name="Dalin E."/>
            <person name="Tice H."/>
            <person name="Bruce D."/>
            <person name="Goodwin L."/>
            <person name="Pitluck S."/>
            <person name="Sims D."/>
            <person name="Brettin T."/>
            <person name="Detter J.C."/>
            <person name="Han C."/>
            <person name="Kuske C.R."/>
            <person name="Schmutz J."/>
            <person name="Larimer F."/>
            <person name="Land M."/>
            <person name="Hauser L."/>
            <person name="Kyrpides N."/>
            <person name="Kim E."/>
            <person name="Zhao J.-S."/>
            <person name="Richardson P."/>
        </authorList>
    </citation>
    <scope>NUCLEOTIDE SEQUENCE [LARGE SCALE GENOMIC DNA]</scope>
    <source>
        <strain>HAW-EB4</strain>
    </source>
</reference>
<proteinExistence type="inferred from homology"/>
<protein>
    <recommendedName>
        <fullName evidence="1">Fluoride-specific ion channel FluC</fullName>
    </recommendedName>
</protein>
<organism>
    <name type="scientific">Shewanella halifaxensis (strain HAW-EB4)</name>
    <dbReference type="NCBI Taxonomy" id="458817"/>
    <lineage>
        <taxon>Bacteria</taxon>
        <taxon>Pseudomonadati</taxon>
        <taxon>Pseudomonadota</taxon>
        <taxon>Gammaproteobacteria</taxon>
        <taxon>Alteromonadales</taxon>
        <taxon>Shewanellaceae</taxon>
        <taxon>Shewanella</taxon>
    </lineage>
</organism>
<sequence>MNNVLFVALGGSIGAVLRYLISLLMLQVFGSGFPFGTLVVNILGSFLMGVIFALGQVSELSPEIKAFIGVGMLGALTTFSTFSNESLLLMQEGELVKAVLNVVVNVGVCIFVVYLGQQLVFSRF</sequence>
<keyword id="KW-0997">Cell inner membrane</keyword>
<keyword id="KW-1003">Cell membrane</keyword>
<keyword id="KW-0407">Ion channel</keyword>
<keyword id="KW-0406">Ion transport</keyword>
<keyword id="KW-0472">Membrane</keyword>
<keyword id="KW-0479">Metal-binding</keyword>
<keyword id="KW-0915">Sodium</keyword>
<keyword id="KW-0812">Transmembrane</keyword>
<keyword id="KW-1133">Transmembrane helix</keyword>
<keyword id="KW-0813">Transport</keyword>
<gene>
    <name evidence="1" type="primary">fluC</name>
    <name evidence="1" type="synonym">crcB</name>
    <name type="ordered locus">Shal_2214</name>
</gene>
<name>FLUC_SHEHH</name>
<dbReference type="EMBL" id="CP000931">
    <property type="protein sequence ID" value="ABZ76773.1"/>
    <property type="molecule type" value="Genomic_DNA"/>
</dbReference>
<dbReference type="RefSeq" id="WP_012277303.1">
    <property type="nucleotide sequence ID" value="NC_010334.1"/>
</dbReference>
<dbReference type="SMR" id="B0TUP5"/>
<dbReference type="STRING" id="458817.Shal_2214"/>
<dbReference type="KEGG" id="shl:Shal_2214"/>
<dbReference type="eggNOG" id="COG0239">
    <property type="taxonomic scope" value="Bacteria"/>
</dbReference>
<dbReference type="HOGENOM" id="CLU_114342_3_0_6"/>
<dbReference type="OrthoDB" id="9806299at2"/>
<dbReference type="Proteomes" id="UP000001317">
    <property type="component" value="Chromosome"/>
</dbReference>
<dbReference type="GO" id="GO:0005886">
    <property type="term" value="C:plasma membrane"/>
    <property type="evidence" value="ECO:0007669"/>
    <property type="project" value="UniProtKB-SubCell"/>
</dbReference>
<dbReference type="GO" id="GO:0062054">
    <property type="term" value="F:fluoride channel activity"/>
    <property type="evidence" value="ECO:0007669"/>
    <property type="project" value="UniProtKB-UniRule"/>
</dbReference>
<dbReference type="GO" id="GO:0046872">
    <property type="term" value="F:metal ion binding"/>
    <property type="evidence" value="ECO:0007669"/>
    <property type="project" value="UniProtKB-KW"/>
</dbReference>
<dbReference type="GO" id="GO:0140114">
    <property type="term" value="P:cellular detoxification of fluoride"/>
    <property type="evidence" value="ECO:0007669"/>
    <property type="project" value="UniProtKB-UniRule"/>
</dbReference>
<dbReference type="HAMAP" id="MF_00454">
    <property type="entry name" value="FluC"/>
    <property type="match status" value="1"/>
</dbReference>
<dbReference type="InterPro" id="IPR003691">
    <property type="entry name" value="FluC"/>
</dbReference>
<dbReference type="NCBIfam" id="TIGR00494">
    <property type="entry name" value="crcB"/>
    <property type="match status" value="1"/>
</dbReference>
<dbReference type="PANTHER" id="PTHR28259">
    <property type="entry name" value="FLUORIDE EXPORT PROTEIN 1-RELATED"/>
    <property type="match status" value="1"/>
</dbReference>
<dbReference type="PANTHER" id="PTHR28259:SF1">
    <property type="entry name" value="FLUORIDE EXPORT PROTEIN 1-RELATED"/>
    <property type="match status" value="1"/>
</dbReference>
<dbReference type="Pfam" id="PF02537">
    <property type="entry name" value="CRCB"/>
    <property type="match status" value="1"/>
</dbReference>
<feature type="chain" id="PRO_1000081020" description="Fluoride-specific ion channel FluC">
    <location>
        <begin position="1"/>
        <end position="124"/>
    </location>
</feature>
<feature type="transmembrane region" description="Helical" evidence="1">
    <location>
        <begin position="4"/>
        <end position="24"/>
    </location>
</feature>
<feature type="transmembrane region" description="Helical" evidence="1">
    <location>
        <begin position="35"/>
        <end position="55"/>
    </location>
</feature>
<feature type="transmembrane region" description="Helical" evidence="1">
    <location>
        <begin position="62"/>
        <end position="82"/>
    </location>
</feature>
<feature type="transmembrane region" description="Helical" evidence="1">
    <location>
        <begin position="95"/>
        <end position="115"/>
    </location>
</feature>
<feature type="binding site" evidence="1">
    <location>
        <position position="74"/>
    </location>
    <ligand>
        <name>Na(+)</name>
        <dbReference type="ChEBI" id="CHEBI:29101"/>
        <note>structural</note>
    </ligand>
</feature>
<feature type="binding site" evidence="1">
    <location>
        <position position="77"/>
    </location>
    <ligand>
        <name>Na(+)</name>
        <dbReference type="ChEBI" id="CHEBI:29101"/>
        <note>structural</note>
    </ligand>
</feature>